<dbReference type="EC" id="2.1.1.362" evidence="6 7"/>
<dbReference type="EC" id="2.1.1.361" evidence="6"/>
<dbReference type="EMBL" id="AC020922">
    <property type="status" value="NOT_ANNOTATED_CDS"/>
    <property type="molecule type" value="Genomic_DNA"/>
</dbReference>
<dbReference type="EMBL" id="BC005842">
    <property type="protein sequence ID" value="AAH05842.1"/>
    <property type="status" value="ALT_SEQ"/>
    <property type="molecule type" value="mRNA"/>
</dbReference>
<dbReference type="EMBL" id="BC019313">
    <property type="protein sequence ID" value="AAH19313.1"/>
    <property type="molecule type" value="mRNA"/>
</dbReference>
<dbReference type="EMBL" id="BC044889">
    <property type="protein sequence ID" value="AAH44889.1"/>
    <property type="molecule type" value="mRNA"/>
</dbReference>
<dbReference type="EMBL" id="AF289582">
    <property type="protein sequence ID" value="AAL55766.1"/>
    <property type="status" value="ALT_SEQ"/>
    <property type="molecule type" value="mRNA"/>
</dbReference>
<dbReference type="CCDS" id="CCDS12922.1">
    <molecule id="Q86Y97-1"/>
</dbReference>
<dbReference type="RefSeq" id="NP_116090.2">
    <molecule id="Q86Y97-1"/>
    <property type="nucleotide sequence ID" value="NM_032701.3"/>
</dbReference>
<dbReference type="RefSeq" id="XP_005259395.1">
    <property type="nucleotide sequence ID" value="XM_005259338.3"/>
</dbReference>
<dbReference type="RefSeq" id="XP_006723505.1">
    <property type="nucleotide sequence ID" value="XM_006723442.3"/>
</dbReference>
<dbReference type="RefSeq" id="XP_011525717.1">
    <molecule id="Q86Y97-1"/>
    <property type="nucleotide sequence ID" value="XM_011527415.4"/>
</dbReference>
<dbReference type="RefSeq" id="XP_054178384.1">
    <molecule id="Q86Y97-1"/>
    <property type="nucleotide sequence ID" value="XM_054322409.1"/>
</dbReference>
<dbReference type="PDB" id="3RQ4">
    <property type="method" value="X-ray"/>
    <property type="resolution" value="1.80 A"/>
    <property type="chains" value="A=2-248"/>
</dbReference>
<dbReference type="PDBsum" id="3RQ4"/>
<dbReference type="SMR" id="Q86Y97"/>
<dbReference type="BioGRID" id="124257">
    <property type="interactions" value="41"/>
</dbReference>
<dbReference type="FunCoup" id="Q86Y97">
    <property type="interactions" value="1473"/>
</dbReference>
<dbReference type="IntAct" id="Q86Y97">
    <property type="interactions" value="34"/>
</dbReference>
<dbReference type="MINT" id="Q86Y97"/>
<dbReference type="STRING" id="9606.ENSP00000255613"/>
<dbReference type="BindingDB" id="Q86Y97"/>
<dbReference type="ChEMBL" id="CHEMBL2321644"/>
<dbReference type="GuidetoPHARMACOLOGY" id="2718"/>
<dbReference type="GlyGen" id="Q86Y97">
    <property type="glycosylation" value="3 sites, 1 O-linked glycan (1 site)"/>
</dbReference>
<dbReference type="iPTMnet" id="Q86Y97"/>
<dbReference type="PhosphoSitePlus" id="Q86Y97"/>
<dbReference type="BioMuta" id="KMT5C"/>
<dbReference type="DMDM" id="74727906"/>
<dbReference type="jPOST" id="Q86Y97"/>
<dbReference type="MassIVE" id="Q86Y97"/>
<dbReference type="PaxDb" id="9606-ENSP00000255613"/>
<dbReference type="PeptideAtlas" id="Q86Y97"/>
<dbReference type="ProteomicsDB" id="70387">
    <molecule id="Q86Y97-1"/>
</dbReference>
<dbReference type="ProteomicsDB" id="70388">
    <molecule id="Q86Y97-2"/>
</dbReference>
<dbReference type="Pumba" id="Q86Y97"/>
<dbReference type="ABCD" id="Q86Y97">
    <property type="antibodies" value="1 sequenced antibody"/>
</dbReference>
<dbReference type="Antibodypedia" id="46420">
    <property type="antibodies" value="82 antibodies from 21 providers"/>
</dbReference>
<dbReference type="DNASU" id="84787"/>
<dbReference type="Ensembl" id="ENST00000255613.8">
    <molecule id="Q86Y97-1"/>
    <property type="protein sequence ID" value="ENSP00000255613.3"/>
    <property type="gene ID" value="ENSG00000133247.14"/>
</dbReference>
<dbReference type="Ensembl" id="ENST00000445196.5">
    <molecule id="Q86Y97-2"/>
    <property type="protein sequence ID" value="ENSP00000397296.1"/>
    <property type="gene ID" value="ENSG00000133247.14"/>
</dbReference>
<dbReference type="Ensembl" id="ENST00000592631.5">
    <molecule id="Q86Y97-2"/>
    <property type="protein sequence ID" value="ENSP00000467499.1"/>
    <property type="gene ID" value="ENSG00000133247.14"/>
</dbReference>
<dbReference type="GeneID" id="84787"/>
<dbReference type="KEGG" id="hsa:84787"/>
<dbReference type="MANE-Select" id="ENST00000255613.8">
    <property type="protein sequence ID" value="ENSP00000255613.3"/>
    <property type="RefSeq nucleotide sequence ID" value="NM_032701.4"/>
    <property type="RefSeq protein sequence ID" value="NP_116090.2"/>
</dbReference>
<dbReference type="UCSC" id="uc002qkj.5">
    <molecule id="Q86Y97-1"/>
    <property type="organism name" value="human"/>
</dbReference>
<dbReference type="AGR" id="HGNC:28405"/>
<dbReference type="CTD" id="84787"/>
<dbReference type="DisGeNET" id="84787"/>
<dbReference type="GeneCards" id="KMT5C"/>
<dbReference type="HGNC" id="HGNC:28405">
    <property type="gene designation" value="KMT5C"/>
</dbReference>
<dbReference type="HPA" id="ENSG00000133247">
    <property type="expression patterns" value="Low tissue specificity"/>
</dbReference>
<dbReference type="MIM" id="613198">
    <property type="type" value="gene"/>
</dbReference>
<dbReference type="neXtProt" id="NX_Q86Y97"/>
<dbReference type="OpenTargets" id="ENSG00000133247"/>
<dbReference type="PharmGKB" id="PA134934307"/>
<dbReference type="VEuPathDB" id="HostDB:ENSG00000133247"/>
<dbReference type="eggNOG" id="KOG2589">
    <property type="taxonomic scope" value="Eukaryota"/>
</dbReference>
<dbReference type="GeneTree" id="ENSGT00940000161700"/>
<dbReference type="HOGENOM" id="CLU_040002_0_0_1"/>
<dbReference type="InParanoid" id="Q86Y97"/>
<dbReference type="OMA" id="GCGPHCC"/>
<dbReference type="OrthoDB" id="6627536at2759"/>
<dbReference type="PAN-GO" id="Q86Y97">
    <property type="GO annotations" value="3 GO annotations based on evolutionary models"/>
</dbReference>
<dbReference type="PhylomeDB" id="Q86Y97"/>
<dbReference type="TreeFam" id="TF106433"/>
<dbReference type="BioCyc" id="MetaCyc:HS13469-MONOMER"/>
<dbReference type="BRENDA" id="2.1.1.361">
    <property type="organism ID" value="2681"/>
</dbReference>
<dbReference type="PathwayCommons" id="Q86Y97"/>
<dbReference type="Reactome" id="R-HSA-3214841">
    <property type="pathway name" value="PKMTs methylate histone lysines"/>
</dbReference>
<dbReference type="SignaLink" id="Q86Y97"/>
<dbReference type="SIGNOR" id="Q86Y97"/>
<dbReference type="BioGRID-ORCS" id="84787">
    <property type="hits" value="12 hits in 1160 CRISPR screens"/>
</dbReference>
<dbReference type="ChiTaRS" id="KMT5C">
    <property type="organism name" value="human"/>
</dbReference>
<dbReference type="EvolutionaryTrace" id="Q86Y97"/>
<dbReference type="GenomeRNAi" id="84787"/>
<dbReference type="Pharos" id="Q86Y97">
    <property type="development level" value="Tchem"/>
</dbReference>
<dbReference type="PRO" id="PR:Q86Y97"/>
<dbReference type="Proteomes" id="UP000005640">
    <property type="component" value="Chromosome 19"/>
</dbReference>
<dbReference type="RNAct" id="Q86Y97">
    <property type="molecule type" value="protein"/>
</dbReference>
<dbReference type="Bgee" id="ENSG00000133247">
    <property type="expression patterns" value="Expressed in pancreatic ductal cell and 180 other cell types or tissues"/>
</dbReference>
<dbReference type="ExpressionAtlas" id="Q86Y97">
    <property type="expression patterns" value="baseline and differential"/>
</dbReference>
<dbReference type="GO" id="GO:0000779">
    <property type="term" value="C:condensed chromosome, centromeric region"/>
    <property type="evidence" value="ECO:0007669"/>
    <property type="project" value="Ensembl"/>
</dbReference>
<dbReference type="GO" id="GO:0000792">
    <property type="term" value="C:heterochromatin"/>
    <property type="evidence" value="ECO:0000314"/>
    <property type="project" value="BHF-UCL"/>
</dbReference>
<dbReference type="GO" id="GO:0005654">
    <property type="term" value="C:nucleoplasm"/>
    <property type="evidence" value="ECO:0000314"/>
    <property type="project" value="HPA"/>
</dbReference>
<dbReference type="GO" id="GO:0005634">
    <property type="term" value="C:nucleus"/>
    <property type="evidence" value="ECO:0000318"/>
    <property type="project" value="GO_Central"/>
</dbReference>
<dbReference type="GO" id="GO:0005721">
    <property type="term" value="C:pericentric heterochromatin"/>
    <property type="evidence" value="ECO:0000314"/>
    <property type="project" value="BHF-UCL"/>
</dbReference>
<dbReference type="GO" id="GO:0003682">
    <property type="term" value="F:chromatin binding"/>
    <property type="evidence" value="ECO:0000314"/>
    <property type="project" value="UniProtKB"/>
</dbReference>
<dbReference type="GO" id="GO:0042393">
    <property type="term" value="F:histone binding"/>
    <property type="evidence" value="ECO:0007669"/>
    <property type="project" value="Ensembl"/>
</dbReference>
<dbReference type="GO" id="GO:0140939">
    <property type="term" value="F:histone H4 methyltransferase activity"/>
    <property type="evidence" value="ECO:0000304"/>
    <property type="project" value="Reactome"/>
</dbReference>
<dbReference type="GO" id="GO:0042799">
    <property type="term" value="F:histone H4K20 methyltransferase activity"/>
    <property type="evidence" value="ECO:0000314"/>
    <property type="project" value="UniProtKB"/>
</dbReference>
<dbReference type="GO" id="GO:0140944">
    <property type="term" value="F:histone H4K20 monomethyltransferase activity"/>
    <property type="evidence" value="ECO:0007669"/>
    <property type="project" value="UniProtKB-EC"/>
</dbReference>
<dbReference type="GO" id="GO:0140941">
    <property type="term" value="F:histone H4K20me methyltransferase activity"/>
    <property type="evidence" value="ECO:0007669"/>
    <property type="project" value="UniProtKB-EC"/>
</dbReference>
<dbReference type="GO" id="GO:0046872">
    <property type="term" value="F:metal ion binding"/>
    <property type="evidence" value="ECO:0007669"/>
    <property type="project" value="UniProtKB-KW"/>
</dbReference>
<dbReference type="GO" id="GO:1904047">
    <property type="term" value="F:S-adenosyl-L-methionine binding"/>
    <property type="evidence" value="ECO:0000314"/>
    <property type="project" value="UniProtKB"/>
</dbReference>
<dbReference type="GO" id="GO:0006281">
    <property type="term" value="P:DNA repair"/>
    <property type="evidence" value="ECO:0000315"/>
    <property type="project" value="UniProtKB"/>
</dbReference>
<dbReference type="GO" id="GO:0032259">
    <property type="term" value="P:methylation"/>
    <property type="evidence" value="ECO:0007669"/>
    <property type="project" value="UniProtKB-KW"/>
</dbReference>
<dbReference type="GO" id="GO:2001034">
    <property type="term" value="P:positive regulation of double-strand break repair via nonhomologous end joining"/>
    <property type="evidence" value="ECO:0000315"/>
    <property type="project" value="UniProtKB"/>
</dbReference>
<dbReference type="GO" id="GO:0045830">
    <property type="term" value="P:positive regulation of isotype switching"/>
    <property type="evidence" value="ECO:0000250"/>
    <property type="project" value="UniProtKB"/>
</dbReference>
<dbReference type="CDD" id="cd19185">
    <property type="entry name" value="SET_KMT5C"/>
    <property type="match status" value="1"/>
</dbReference>
<dbReference type="FunFam" id="1.10.10.1700:FF:000001">
    <property type="entry name" value="Histone-lysine N-methyltransferase"/>
    <property type="match status" value="1"/>
</dbReference>
<dbReference type="FunFam" id="2.170.270.10:FF:000006">
    <property type="entry name" value="Histone-lysine N-methyltransferase"/>
    <property type="match status" value="1"/>
</dbReference>
<dbReference type="Gene3D" id="1.10.10.1700">
    <property type="entry name" value="Histone-lysine N-methyltransferase"/>
    <property type="match status" value="1"/>
</dbReference>
<dbReference type="Gene3D" id="2.170.270.10">
    <property type="entry name" value="SET domain"/>
    <property type="match status" value="1"/>
</dbReference>
<dbReference type="InterPro" id="IPR041938">
    <property type="entry name" value="Hist-Lys_N-MTase_N"/>
</dbReference>
<dbReference type="InterPro" id="IPR044425">
    <property type="entry name" value="KMT5C_SET"/>
</dbReference>
<dbReference type="InterPro" id="IPR001214">
    <property type="entry name" value="SET_dom"/>
</dbReference>
<dbReference type="InterPro" id="IPR046341">
    <property type="entry name" value="SET_dom_sf"/>
</dbReference>
<dbReference type="InterPro" id="IPR039977">
    <property type="entry name" value="Suv4-20/Set9"/>
</dbReference>
<dbReference type="InterPro" id="IPR025790">
    <property type="entry name" value="Suv4-20_animal"/>
</dbReference>
<dbReference type="PANTHER" id="PTHR12977:SF11">
    <property type="entry name" value="HISTONE-LYSINE N-METHYLTRANSFERASE KMT5C"/>
    <property type="match status" value="1"/>
</dbReference>
<dbReference type="PANTHER" id="PTHR12977">
    <property type="entry name" value="SUPPRESSOR OF VARIEGATION 4-20-RELATED"/>
    <property type="match status" value="1"/>
</dbReference>
<dbReference type="Pfam" id="PF00856">
    <property type="entry name" value="SET"/>
    <property type="match status" value="1"/>
</dbReference>
<dbReference type="SMART" id="SM00317">
    <property type="entry name" value="SET"/>
    <property type="match status" value="1"/>
</dbReference>
<dbReference type="SUPFAM" id="SSF82199">
    <property type="entry name" value="SET domain"/>
    <property type="match status" value="1"/>
</dbReference>
<dbReference type="PROSITE" id="PS51570">
    <property type="entry name" value="SAM_MT43_SUVAR420_2"/>
    <property type="match status" value="1"/>
</dbReference>
<dbReference type="PROSITE" id="PS50280">
    <property type="entry name" value="SET"/>
    <property type="match status" value="1"/>
</dbReference>
<comment type="function">
    <text evidence="2 6 7">Histone methyltransferase that specifically methylates monomethylated 'Lys-20' (H4K20me1) and dimethylated 'Lys-20' (H4K20me2) of histone H4 to produce respectively dimethylated 'Lys-20' (H4K20me2) and trimethylated 'Lys-20' (H4K20me3) and thus regulates transcription and maintenance of genome integrity (PubMed:24396869, PubMed:28114273). In vitro also methylates unmodified 'Lys-20' (H4K20me0) of histone H4 and nucleosomes (PubMed:24396869). H4 'Lys-20' trimethylation represents a specific tag for epigenetic transcriptional repression. Mainly functions in pericentric heterochromatin regions, thereby playing a central role in the establishment of constitutive heterochromatin in these regions. KMT5C is targeted to histone H3 via its interaction with RB1 family proteins (RB1, RBL1 and RBL2) (By similarity). Facilitates TP53BP1 foci formation upon DNA damage and proficient non-homologous end-joining (NHEJ)-directed DNA repair by catalyzing the di- and trimethylation of 'Lys-20' of histone H4 (PubMed:28114273). May play a role in class switch reconbination by catalyzing the di- and trimethylation of 'Lys-20' of histone H4 (By similarity).</text>
</comment>
<comment type="catalytic activity">
    <reaction evidence="6 7">
        <text>N(6)-methyl-L-lysyl(20)-[histone H4] + S-adenosyl-L-methionine = N(6),N(6)-dimethyl-L-lysyl(20)-[histone H4] + S-adenosyl-L-homocysteine + H(+)</text>
        <dbReference type="Rhea" id="RHEA:60348"/>
        <dbReference type="Rhea" id="RHEA-COMP:15555"/>
        <dbReference type="Rhea" id="RHEA-COMP:15556"/>
        <dbReference type="ChEBI" id="CHEBI:15378"/>
        <dbReference type="ChEBI" id="CHEBI:57856"/>
        <dbReference type="ChEBI" id="CHEBI:59789"/>
        <dbReference type="ChEBI" id="CHEBI:61929"/>
        <dbReference type="ChEBI" id="CHEBI:61976"/>
        <dbReference type="EC" id="2.1.1.362"/>
    </reaction>
    <physiologicalReaction direction="left-to-right" evidence="7">
        <dbReference type="Rhea" id="RHEA:60349"/>
    </physiologicalReaction>
</comment>
<comment type="catalytic activity">
    <reaction evidence="7">
        <text>N(6),N(6)-dimethyl-L-lysyl(20)-[histone H4] + S-adenosyl-L-methionine = N(6),N(6),N(6)-trimethyl-L-lysyl(20)-[histone H4] + S-adenosyl-L-homocysteine + H(+)</text>
        <dbReference type="Rhea" id="RHEA:61992"/>
        <dbReference type="Rhea" id="RHEA-COMP:15556"/>
        <dbReference type="Rhea" id="RHEA-COMP:15998"/>
        <dbReference type="ChEBI" id="CHEBI:15378"/>
        <dbReference type="ChEBI" id="CHEBI:57856"/>
        <dbReference type="ChEBI" id="CHEBI:59789"/>
        <dbReference type="ChEBI" id="CHEBI:61961"/>
        <dbReference type="ChEBI" id="CHEBI:61976"/>
    </reaction>
    <physiologicalReaction direction="left-to-right" evidence="7">
        <dbReference type="Rhea" id="RHEA:61993"/>
    </physiologicalReaction>
</comment>
<comment type="catalytic activity">
    <reaction evidence="6">
        <text>L-lysyl(20)-[histone H4] + S-adenosyl-L-methionine = N(6)-methyl-L-lysyl(20)-[histone H4] + S-adenosyl-L-homocysteine + H(+)</text>
        <dbReference type="Rhea" id="RHEA:60344"/>
        <dbReference type="Rhea" id="RHEA-COMP:15554"/>
        <dbReference type="Rhea" id="RHEA-COMP:15555"/>
        <dbReference type="ChEBI" id="CHEBI:15378"/>
        <dbReference type="ChEBI" id="CHEBI:29969"/>
        <dbReference type="ChEBI" id="CHEBI:57856"/>
        <dbReference type="ChEBI" id="CHEBI:59789"/>
        <dbReference type="ChEBI" id="CHEBI:61929"/>
        <dbReference type="EC" id="2.1.1.361"/>
    </reaction>
</comment>
<comment type="activity regulation">
    <text evidence="7">Inhibited by 6,7-Dichloro-N-cyclopentyl-4-(pyridin-4-yl)phthalazin-1-amine (A-196) with an IC(50) of 144 nM.</text>
</comment>
<comment type="biophysicochemical properties">
    <kinetics>
        <KM evidence="6">21 uM for H4K20me0</KM>
        <KM evidence="6">16 uM for H4K20me1</KM>
        <KM evidence="6">0.5 uM for nucleosome</KM>
    </kinetics>
    <phDependence>
        <text evidence="6">Optimum pH is 8.</text>
    </phDependence>
</comment>
<comment type="subunit">
    <text evidence="2">Homodimer (By similarity). Interacts with HP1 proteins CBX1, CBX3 and CBX5. Interacts with RB1 family proteins RB1, RBL1 and RBL2 (By similarity).</text>
</comment>
<comment type="interaction">
    <interactant intactId="EBI-7960569">
        <id>Q86Y97</id>
    </interactant>
    <interactant intactId="EBI-78176">
        <id>Q13185</id>
        <label>CBX3</label>
    </interactant>
    <organismsDiffer>false</organismsDiffer>
    <experiments>3</experiments>
</comment>
<comment type="subcellular location">
    <subcellularLocation>
        <location>Nucleus</location>
    </subcellularLocation>
    <subcellularLocation>
        <location evidence="1">Chromosome</location>
    </subcellularLocation>
    <text evidence="1">Associated with pericentric heterochromatin. CBX1 and CBX5 are required for the localization to pericentric heterochromatin (By similarity).</text>
</comment>
<comment type="alternative products">
    <event type="alternative splicing"/>
    <isoform>
        <id>Q86Y97-1</id>
        <name>1</name>
        <sequence type="displayed"/>
    </isoform>
    <isoform>
        <id>Q86Y97-2</id>
        <name>2</name>
        <sequence type="described" ref="VSP_043947 VSP_043948"/>
    </isoform>
</comment>
<comment type="miscellaneous">
    <molecule>Isoform 2</molecule>
    <text evidence="9">May be produced at very low levels due to a premature stop codon in the mRNA, leading to nonsense-mediated mRNA decay.</text>
</comment>
<comment type="similarity">
    <text evidence="4">Belongs to the class V-like SAM-binding methyltransferase superfamily. Histone-lysine methyltransferase family. Suvar4-20 subfamily.</text>
</comment>
<comment type="sequence caution" evidence="9">
    <conflict type="erroneous translation">
        <sequence resource="EMBL-CDS" id="AAH05842"/>
    </conflict>
    <text>Wrong choice of CDS.</text>
</comment>
<comment type="sequence caution" evidence="9">
    <conflict type="miscellaneous discrepancy">
        <sequence resource="EMBL-CDS" id="AAL55766"/>
    </conflict>
    <text>Probable cloning artifact.</text>
</comment>
<accession>Q86Y97</accession>
<accession>Q8WZ10</accession>
<accession>Q9BRZ6</accession>
<gene>
    <name evidence="10" type="primary">KMT5C</name>
    <name type="synonym">SUV420H2</name>
    <name type="ORF">PP7130</name>
</gene>
<feature type="chain" id="PRO_0000281793" description="Histone-lysine N-methyltransferase KMT5C">
    <location>
        <begin position="1"/>
        <end position="462"/>
    </location>
</feature>
<feature type="domain" description="SET" evidence="3">
    <location>
        <begin position="104"/>
        <end position="218"/>
    </location>
</feature>
<feature type="region of interest" description="Disordered" evidence="5">
    <location>
        <begin position="325"/>
        <end position="348"/>
    </location>
</feature>
<feature type="region of interest" description="Required for heterochromatin localization" evidence="1">
    <location>
        <begin position="346"/>
        <end position="435"/>
    </location>
</feature>
<feature type="compositionally biased region" description="Basic residues" evidence="5">
    <location>
        <begin position="330"/>
        <end position="342"/>
    </location>
</feature>
<feature type="binding site" evidence="6 11">
    <location>
        <position position="32"/>
    </location>
    <ligand>
        <name>S-adenosyl-L-methionine</name>
        <dbReference type="ChEBI" id="CHEBI:59789"/>
    </ligand>
</feature>
<feature type="binding site" evidence="6 11">
    <location>
        <begin position="114"/>
        <end position="117"/>
    </location>
    <ligand>
        <name>S-adenosyl-L-methionine</name>
        <dbReference type="ChEBI" id="CHEBI:59789"/>
    </ligand>
</feature>
<feature type="binding site" evidence="6 11">
    <location>
        <position position="121"/>
    </location>
    <ligand>
        <name>S-adenosyl-L-methionine</name>
        <dbReference type="ChEBI" id="CHEBI:59789"/>
    </ligand>
</feature>
<feature type="binding site" evidence="6 11">
    <location>
        <position position="160"/>
    </location>
    <ligand>
        <name>S-adenosyl-L-methionine</name>
        <dbReference type="ChEBI" id="CHEBI:59789"/>
    </ligand>
</feature>
<feature type="binding site" evidence="6 11">
    <location>
        <position position="169"/>
    </location>
    <ligand>
        <name>S-adenosyl-L-methionine</name>
        <dbReference type="ChEBI" id="CHEBI:59789"/>
    </ligand>
</feature>
<feature type="binding site" evidence="6 11">
    <location>
        <begin position="182"/>
        <end position="183"/>
    </location>
    <ligand>
        <name>S-adenosyl-L-methionine</name>
        <dbReference type="ChEBI" id="CHEBI:59789"/>
    </ligand>
</feature>
<feature type="binding site" evidence="6 11">
    <location>
        <position position="185"/>
    </location>
    <ligand>
        <name>Zn(2+)</name>
        <dbReference type="ChEBI" id="CHEBI:29105"/>
    </ligand>
</feature>
<feature type="binding site" evidence="6 11">
    <location>
        <position position="229"/>
    </location>
    <ligand>
        <name>Zn(2+)</name>
        <dbReference type="ChEBI" id="CHEBI:29105"/>
    </ligand>
</feature>
<feature type="binding site" evidence="6 11">
    <location>
        <position position="230"/>
    </location>
    <ligand>
        <name>S-adenosyl-L-methionine</name>
        <dbReference type="ChEBI" id="CHEBI:59789"/>
    </ligand>
</feature>
<feature type="binding site" evidence="6 11">
    <location>
        <position position="231"/>
    </location>
    <ligand>
        <name>Zn(2+)</name>
        <dbReference type="ChEBI" id="CHEBI:29105"/>
    </ligand>
</feature>
<feature type="binding site" evidence="6 11">
    <location>
        <position position="234"/>
    </location>
    <ligand>
        <name>Zn(2+)</name>
        <dbReference type="ChEBI" id="CHEBI:29105"/>
    </ligand>
</feature>
<feature type="modified residue" description="Phosphothreonine" evidence="12 13">
    <location>
        <position position="416"/>
    </location>
</feature>
<feature type="modified residue" description="Phosphothreonine" evidence="13">
    <location>
        <position position="422"/>
    </location>
</feature>
<feature type="splice variant" id="VSP_043947" description="In isoform 2." evidence="8">
    <original>SPVPPLRRQQHLRSALETFLRQRDLEAAYRALTLGGWTARYFQSRGPRQEAALKTHVYRYL</original>
    <variation>RSIATSVPSCRKVALPSCPARATPWRPTGPRSCPLVLGKRMRSWSCWWAALQSCGRQMRGC</variation>
    <location>
        <begin position="37"/>
        <end position="97"/>
    </location>
</feature>
<feature type="splice variant" id="VSP_043948" description="In isoform 2." evidence="8">
    <location>
        <begin position="98"/>
        <end position="462"/>
    </location>
</feature>
<feature type="helix" evidence="14">
    <location>
        <begin position="8"/>
        <end position="27"/>
    </location>
</feature>
<feature type="helix" evidence="14">
    <location>
        <begin position="45"/>
        <end position="58"/>
    </location>
</feature>
<feature type="helix" evidence="14">
    <location>
        <begin position="61"/>
        <end position="69"/>
    </location>
</feature>
<feature type="turn" evidence="14">
    <location>
        <begin position="70"/>
        <end position="78"/>
    </location>
</feature>
<feature type="helix" evidence="14">
    <location>
        <begin position="83"/>
        <end position="99"/>
    </location>
</feature>
<feature type="helix" evidence="14">
    <location>
        <begin position="102"/>
        <end position="104"/>
    </location>
</feature>
<feature type="strand" evidence="14">
    <location>
        <begin position="106"/>
        <end position="110"/>
    </location>
</feature>
<feature type="strand" evidence="14">
    <location>
        <begin position="121"/>
        <end position="127"/>
    </location>
</feature>
<feature type="strand" evidence="14">
    <location>
        <begin position="134"/>
        <end position="144"/>
    </location>
</feature>
<feature type="helix" evidence="14">
    <location>
        <begin position="147"/>
        <end position="152"/>
    </location>
</feature>
<feature type="turn" evidence="14">
    <location>
        <begin position="155"/>
        <end position="157"/>
    </location>
</feature>
<feature type="strand" evidence="14">
    <location>
        <begin position="162"/>
        <end position="165"/>
    </location>
</feature>
<feature type="turn" evidence="14">
    <location>
        <begin position="166"/>
        <end position="169"/>
    </location>
</feature>
<feature type="strand" evidence="14">
    <location>
        <begin position="170"/>
        <end position="176"/>
    </location>
</feature>
<feature type="helix" evidence="14">
    <location>
        <begin position="177"/>
        <end position="180"/>
    </location>
</feature>
<feature type="strand" evidence="14">
    <location>
        <begin position="188"/>
        <end position="194"/>
    </location>
</feature>
<feature type="turn" evidence="14">
    <location>
        <begin position="195"/>
        <end position="197"/>
    </location>
</feature>
<feature type="strand" evidence="14">
    <location>
        <begin position="198"/>
        <end position="205"/>
    </location>
</feature>
<feature type="strand" evidence="14">
    <location>
        <begin position="221"/>
        <end position="223"/>
    </location>
</feature>
<feature type="helix" evidence="14">
    <location>
        <begin position="224"/>
        <end position="226"/>
    </location>
</feature>
<feature type="helix" evidence="14">
    <location>
        <begin position="232"/>
        <end position="237"/>
    </location>
</feature>
<feature type="helix" evidence="14">
    <location>
        <begin position="240"/>
        <end position="242"/>
    </location>
</feature>
<name>KMT5C_HUMAN</name>
<reference key="1">
    <citation type="journal article" date="2004" name="Nature">
        <title>The DNA sequence and biology of human chromosome 19.</title>
        <authorList>
            <person name="Grimwood J."/>
            <person name="Gordon L.A."/>
            <person name="Olsen A.S."/>
            <person name="Terry A."/>
            <person name="Schmutz J."/>
            <person name="Lamerdin J.E."/>
            <person name="Hellsten U."/>
            <person name="Goodstein D."/>
            <person name="Couronne O."/>
            <person name="Tran-Gyamfi M."/>
            <person name="Aerts A."/>
            <person name="Altherr M."/>
            <person name="Ashworth L."/>
            <person name="Bajorek E."/>
            <person name="Black S."/>
            <person name="Branscomb E."/>
            <person name="Caenepeel S."/>
            <person name="Carrano A.V."/>
            <person name="Caoile C."/>
            <person name="Chan Y.M."/>
            <person name="Christensen M."/>
            <person name="Cleland C.A."/>
            <person name="Copeland A."/>
            <person name="Dalin E."/>
            <person name="Dehal P."/>
            <person name="Denys M."/>
            <person name="Detter J.C."/>
            <person name="Escobar J."/>
            <person name="Flowers D."/>
            <person name="Fotopulos D."/>
            <person name="Garcia C."/>
            <person name="Georgescu A.M."/>
            <person name="Glavina T."/>
            <person name="Gomez M."/>
            <person name="Gonzales E."/>
            <person name="Groza M."/>
            <person name="Hammon N."/>
            <person name="Hawkins T."/>
            <person name="Haydu L."/>
            <person name="Ho I."/>
            <person name="Huang W."/>
            <person name="Israni S."/>
            <person name="Jett J."/>
            <person name="Kadner K."/>
            <person name="Kimball H."/>
            <person name="Kobayashi A."/>
            <person name="Larionov V."/>
            <person name="Leem S.-H."/>
            <person name="Lopez F."/>
            <person name="Lou Y."/>
            <person name="Lowry S."/>
            <person name="Malfatti S."/>
            <person name="Martinez D."/>
            <person name="McCready P.M."/>
            <person name="Medina C."/>
            <person name="Morgan J."/>
            <person name="Nelson K."/>
            <person name="Nolan M."/>
            <person name="Ovcharenko I."/>
            <person name="Pitluck S."/>
            <person name="Pollard M."/>
            <person name="Popkie A.P."/>
            <person name="Predki P."/>
            <person name="Quan G."/>
            <person name="Ramirez L."/>
            <person name="Rash S."/>
            <person name="Retterer J."/>
            <person name="Rodriguez A."/>
            <person name="Rogers S."/>
            <person name="Salamov A."/>
            <person name="Salazar A."/>
            <person name="She X."/>
            <person name="Smith D."/>
            <person name="Slezak T."/>
            <person name="Solovyev V."/>
            <person name="Thayer N."/>
            <person name="Tice H."/>
            <person name="Tsai M."/>
            <person name="Ustaszewska A."/>
            <person name="Vo N."/>
            <person name="Wagner M."/>
            <person name="Wheeler J."/>
            <person name="Wu K."/>
            <person name="Xie G."/>
            <person name="Yang J."/>
            <person name="Dubchak I."/>
            <person name="Furey T.S."/>
            <person name="DeJong P."/>
            <person name="Dickson M."/>
            <person name="Gordon D."/>
            <person name="Eichler E.E."/>
            <person name="Pennacchio L.A."/>
            <person name="Richardson P."/>
            <person name="Stubbs L."/>
            <person name="Rokhsar D.S."/>
            <person name="Myers R.M."/>
            <person name="Rubin E.M."/>
            <person name="Lucas S.M."/>
        </authorList>
    </citation>
    <scope>NUCLEOTIDE SEQUENCE [LARGE SCALE GENOMIC DNA]</scope>
</reference>
<reference key="2">
    <citation type="journal article" date="2004" name="Genome Res.">
        <title>The status, quality, and expansion of the NIH full-length cDNA project: the Mammalian Gene Collection (MGC).</title>
        <authorList>
            <consortium name="The MGC Project Team"/>
        </authorList>
    </citation>
    <scope>NUCLEOTIDE SEQUENCE [LARGE SCALE MRNA] (ISOFORMS 1 AND 2)</scope>
    <source>
        <tissue>Cervix</tissue>
    </source>
</reference>
<reference key="3">
    <citation type="journal article" date="2004" name="Proc. Natl. Acad. Sci. U.S.A.">
        <title>Large-scale cDNA transfection screening for genes related to cancer development and progression.</title>
        <authorList>
            <person name="Wan D."/>
            <person name="Gong Y."/>
            <person name="Qin W."/>
            <person name="Zhang P."/>
            <person name="Li J."/>
            <person name="Wei L."/>
            <person name="Zhou X."/>
            <person name="Li H."/>
            <person name="Qiu X."/>
            <person name="Zhong F."/>
            <person name="He L."/>
            <person name="Yu J."/>
            <person name="Yao G."/>
            <person name="Jiang H."/>
            <person name="Qian L."/>
            <person name="Yu Y."/>
            <person name="Shu H."/>
            <person name="Chen X."/>
            <person name="Xu H."/>
            <person name="Guo M."/>
            <person name="Pan Z."/>
            <person name="Chen Y."/>
            <person name="Ge C."/>
            <person name="Yang S."/>
            <person name="Gu J."/>
        </authorList>
    </citation>
    <scope>NUCLEOTIDE SEQUENCE [LARGE SCALE MRNA] OF 1-129 (ISOFORM 1)</scope>
</reference>
<reference key="4">
    <citation type="journal article" date="2009" name="Sci. Signal.">
        <title>Quantitative phosphoproteomic analysis of T cell receptor signaling reveals system-wide modulation of protein-protein interactions.</title>
        <authorList>
            <person name="Mayya V."/>
            <person name="Lundgren D.H."/>
            <person name="Hwang S.-I."/>
            <person name="Rezaul K."/>
            <person name="Wu L."/>
            <person name="Eng J.K."/>
            <person name="Rodionov V."/>
            <person name="Han D.K."/>
        </authorList>
    </citation>
    <scope>PHOSPHORYLATION [LARGE SCALE ANALYSIS] AT THR-416</scope>
    <scope>IDENTIFICATION BY MASS SPECTROMETRY [LARGE SCALE ANALYSIS]</scope>
    <source>
        <tissue>Leukemic T-cell</tissue>
    </source>
</reference>
<reference key="5">
    <citation type="journal article" date="2010" name="Sci. Signal.">
        <title>Quantitative phosphoproteomics reveals widespread full phosphorylation site occupancy during mitosis.</title>
        <authorList>
            <person name="Olsen J.V."/>
            <person name="Vermeulen M."/>
            <person name="Santamaria A."/>
            <person name="Kumar C."/>
            <person name="Miller M.L."/>
            <person name="Jensen L.J."/>
            <person name="Gnad F."/>
            <person name="Cox J."/>
            <person name="Jensen T.S."/>
            <person name="Nigg E.A."/>
            <person name="Brunak S."/>
            <person name="Mann M."/>
        </authorList>
    </citation>
    <scope>PHOSPHORYLATION [LARGE SCALE ANALYSIS] AT THR-416 AND THR-422</scope>
    <scope>IDENTIFICATION BY MASS SPECTROMETRY [LARGE SCALE ANALYSIS]</scope>
    <source>
        <tissue>Cervix carcinoma</tissue>
    </source>
</reference>
<reference key="6">
    <citation type="journal article" date="2017" name="Nat. Chem. Biol.">
        <title>The SUV4-20 inhibitor A-196 verifies a role for epigenetics in genomic integrity.</title>
        <authorList>
            <person name="Bromberg K.D."/>
            <person name="Mitchell T.R."/>
            <person name="Upadhyay A.K."/>
            <person name="Jakob C.G."/>
            <person name="Jhala M.A."/>
            <person name="Comess K.M."/>
            <person name="Lasko L.M."/>
            <person name="Li C."/>
            <person name="Tuzon C.T."/>
            <person name="Dai Y."/>
            <person name="Li F."/>
            <person name="Eram M.S."/>
            <person name="Nuber A."/>
            <person name="Soni N.B."/>
            <person name="Manaves V."/>
            <person name="Algire M.A."/>
            <person name="Sweis R.F."/>
            <person name="Torrent M."/>
            <person name="Schotta G."/>
            <person name="Sun C."/>
            <person name="Michaelides M.R."/>
            <person name="Shoemaker A.R."/>
            <person name="Arrowsmith C.H."/>
            <person name="Brown P.J."/>
            <person name="Santhakumar V."/>
            <person name="Martin A."/>
            <person name="Rice J.C."/>
            <person name="Chiang G.G."/>
            <person name="Vedadi M."/>
            <person name="Barsyte-Lovejoy D."/>
            <person name="Pappano W.N."/>
        </authorList>
    </citation>
    <scope>CATALYTIC ACTIVITY</scope>
    <scope>ACTIVITY REGULATION</scope>
    <scope>FUNCTION</scope>
</reference>
<reference evidence="11" key="7">
    <citation type="journal article" date="2013" name="FEBS Lett.">
        <title>Crystal structures of the human histone H4K20 methyltransferases SUV420H1 and SUV420H2.</title>
        <authorList>
            <person name="Wu H."/>
            <person name="Siarheyeva A."/>
            <person name="Zeng H."/>
            <person name="Lam R."/>
            <person name="Dong A."/>
            <person name="Wu X.H."/>
            <person name="Li Y."/>
            <person name="Schapira M."/>
            <person name="Vedadi M."/>
            <person name="Min J."/>
        </authorList>
    </citation>
    <scope>X-RAY CRYSTALLOGRAPHY (1.80 ANGSTROMS) OF 2-248 IN COMPLEX WITH S-ADENOSYL-L-METHIONINE AND ZINC</scope>
    <scope>CATALYTIC ACTIVITY</scope>
    <scope>FUNCTION</scope>
    <scope>BIOPHYSICOCHEMICAL PROPERTIES</scope>
</reference>
<protein>
    <recommendedName>
        <fullName evidence="9">Histone-lysine N-methyltransferase KMT5C</fullName>
    </recommendedName>
    <alternativeName>
        <fullName>Lysine N-methyltransferase 5C</fullName>
    </alternativeName>
    <alternativeName>
        <fullName evidence="10">Lysine-specific methyltransferase 5C</fullName>
    </alternativeName>
    <alternativeName>
        <fullName>Suppressor of variegation 4-20 homolog 2</fullName>
        <shortName>Su(var)4-20 homolog 2</shortName>
        <shortName>Suv4-20h2</shortName>
    </alternativeName>
    <alternativeName>
        <fullName evidence="9">[histone H4]-N-methyl-L-lysine20 N-methyltransferase KMT5B</fullName>
        <ecNumber evidence="6 7">2.1.1.362</ecNumber>
    </alternativeName>
    <alternativeName>
        <fullName evidence="9">[histone H4]-lysine20 N-methyltransferase KMT5B</fullName>
        <ecNumber evidence="6">2.1.1.361</ecNumber>
    </alternativeName>
</protein>
<sequence length="462" mass="52113">MGPDRVTARELCENDDLATSLVLDPYLGFRTHKMNVSPVPPLRRQQHLRSALETFLRQRDLEAAYRALTLGGWTARYFQSRGPRQEAALKTHVYRYLRAFLPESGFTILPCTRYSMETNGAKIVSTRAWKKNEKLELLVGCIAELREADEGLLRAGENDFSIMYSTRKRSAQLWLGPAAFINHDCKPNCKFVPADGNAACVKVLRDIEPGDEVTCFYGEGFFGEKNEHCECHTCERKGEGAFRTRPREPALPPRPLDKYQLRETKRRLQQGLDSGSRQGLLGPRACVHPSPLRRDPFCAACQPLRLPACSARPDTSPLWLQWLPQPQPRVRPRKRRRPRPRRAPVLSTHHAARVSLHRWGGCGPHCRLRGEALVALGQPPHARWAPQQDWHWARRYGLPYVVRVDLRRLAPAPPATPAPAGTPGPILIPKQALAFAPFSPPKRLRLVVSHGSIDLDVGGEEL</sequence>
<evidence type="ECO:0000250" key="1"/>
<evidence type="ECO:0000250" key="2">
    <source>
        <dbReference type="UniProtKB" id="Q6Q783"/>
    </source>
</evidence>
<evidence type="ECO:0000255" key="3">
    <source>
        <dbReference type="PROSITE-ProRule" id="PRU00190"/>
    </source>
</evidence>
<evidence type="ECO:0000255" key="4">
    <source>
        <dbReference type="PROSITE-ProRule" id="PRU00903"/>
    </source>
</evidence>
<evidence type="ECO:0000256" key="5">
    <source>
        <dbReference type="SAM" id="MobiDB-lite"/>
    </source>
</evidence>
<evidence type="ECO:0000269" key="6">
    <source>
    </source>
</evidence>
<evidence type="ECO:0000269" key="7">
    <source>
    </source>
</evidence>
<evidence type="ECO:0000303" key="8">
    <source>
    </source>
</evidence>
<evidence type="ECO:0000305" key="9"/>
<evidence type="ECO:0000312" key="10">
    <source>
        <dbReference type="HGNC" id="HGNC:28405"/>
    </source>
</evidence>
<evidence type="ECO:0007744" key="11">
    <source>
        <dbReference type="PDB" id="3RQ4"/>
    </source>
</evidence>
<evidence type="ECO:0007744" key="12">
    <source>
    </source>
</evidence>
<evidence type="ECO:0007744" key="13">
    <source>
    </source>
</evidence>
<evidence type="ECO:0007829" key="14">
    <source>
        <dbReference type="PDB" id="3RQ4"/>
    </source>
</evidence>
<proteinExistence type="evidence at protein level"/>
<keyword id="KW-0002">3D-structure</keyword>
<keyword id="KW-0025">Alternative splicing</keyword>
<keyword id="KW-0156">Chromatin regulator</keyword>
<keyword id="KW-0158">Chromosome</keyword>
<keyword id="KW-0479">Metal-binding</keyword>
<keyword id="KW-0489">Methyltransferase</keyword>
<keyword id="KW-0539">Nucleus</keyword>
<keyword id="KW-0597">Phosphoprotein</keyword>
<keyword id="KW-1267">Proteomics identification</keyword>
<keyword id="KW-1185">Reference proteome</keyword>
<keyword id="KW-0678">Repressor</keyword>
<keyword id="KW-0949">S-adenosyl-L-methionine</keyword>
<keyword id="KW-0804">Transcription</keyword>
<keyword id="KW-0805">Transcription regulation</keyword>
<keyword id="KW-0808">Transferase</keyword>
<keyword id="KW-0862">Zinc</keyword>
<organism>
    <name type="scientific">Homo sapiens</name>
    <name type="common">Human</name>
    <dbReference type="NCBI Taxonomy" id="9606"/>
    <lineage>
        <taxon>Eukaryota</taxon>
        <taxon>Metazoa</taxon>
        <taxon>Chordata</taxon>
        <taxon>Craniata</taxon>
        <taxon>Vertebrata</taxon>
        <taxon>Euteleostomi</taxon>
        <taxon>Mammalia</taxon>
        <taxon>Eutheria</taxon>
        <taxon>Euarchontoglires</taxon>
        <taxon>Primates</taxon>
        <taxon>Haplorrhini</taxon>
        <taxon>Catarrhini</taxon>
        <taxon>Hominidae</taxon>
        <taxon>Homo</taxon>
    </lineage>
</organism>